<proteinExistence type="inferred from homology"/>
<keyword id="KW-0963">Cytoplasm</keyword>
<keyword id="KW-0255">Endonuclease</keyword>
<keyword id="KW-0378">Hydrolase</keyword>
<keyword id="KW-0460">Magnesium</keyword>
<keyword id="KW-0479">Metal-binding</keyword>
<keyword id="KW-0507">mRNA processing</keyword>
<keyword id="KW-0540">Nuclease</keyword>
<keyword id="KW-0694">RNA-binding</keyword>
<keyword id="KW-0698">rRNA processing</keyword>
<keyword id="KW-0699">rRNA-binding</keyword>
<keyword id="KW-0819">tRNA processing</keyword>
<reference key="1">
    <citation type="journal article" date="2008" name="PLoS ONE">
        <title>Genome sequence of Brucella abortus vaccine strain S19 compared to virulent strains yields candidate virulence genes.</title>
        <authorList>
            <person name="Crasta O.R."/>
            <person name="Folkerts O."/>
            <person name="Fei Z."/>
            <person name="Mane S.P."/>
            <person name="Evans C."/>
            <person name="Martino-Catt S."/>
            <person name="Bricker B."/>
            <person name="Yu G."/>
            <person name="Du L."/>
            <person name="Sobral B.W."/>
        </authorList>
    </citation>
    <scope>NUCLEOTIDE SEQUENCE [LARGE SCALE GENOMIC DNA]</scope>
    <source>
        <strain>S19</strain>
    </source>
</reference>
<protein>
    <recommendedName>
        <fullName evidence="1">Ribonuclease 3</fullName>
        <ecNumber evidence="1">3.1.26.3</ecNumber>
    </recommendedName>
    <alternativeName>
        <fullName evidence="1">Ribonuclease III</fullName>
        <shortName evidence="1">RNase III</shortName>
    </alternativeName>
</protein>
<comment type="function">
    <text evidence="1">Digests double-stranded RNA. Involved in the processing of primary rRNA transcript to yield the immediate precursors to the large and small rRNAs (23S and 16S). Processes some mRNAs, and tRNAs when they are encoded in the rRNA operon. Processes pre-crRNA and tracrRNA of type II CRISPR loci if present in the organism.</text>
</comment>
<comment type="catalytic activity">
    <reaction evidence="1">
        <text>Endonucleolytic cleavage to 5'-phosphomonoester.</text>
        <dbReference type="EC" id="3.1.26.3"/>
    </reaction>
</comment>
<comment type="cofactor">
    <cofactor evidence="1">
        <name>Mg(2+)</name>
        <dbReference type="ChEBI" id="CHEBI:18420"/>
    </cofactor>
</comment>
<comment type="subunit">
    <text evidence="1">Homodimer.</text>
</comment>
<comment type="subcellular location">
    <subcellularLocation>
        <location evidence="1">Cytoplasm</location>
    </subcellularLocation>
</comment>
<comment type="similarity">
    <text evidence="1">Belongs to the ribonuclease III family.</text>
</comment>
<accession>B2SAD9</accession>
<gene>
    <name evidence="1" type="primary">rnc</name>
    <name type="ordered locus">BAbS19_I06380</name>
</gene>
<evidence type="ECO:0000255" key="1">
    <source>
        <dbReference type="HAMAP-Rule" id="MF_00104"/>
    </source>
</evidence>
<organism>
    <name type="scientific">Brucella abortus (strain S19)</name>
    <dbReference type="NCBI Taxonomy" id="430066"/>
    <lineage>
        <taxon>Bacteria</taxon>
        <taxon>Pseudomonadati</taxon>
        <taxon>Pseudomonadota</taxon>
        <taxon>Alphaproteobacteria</taxon>
        <taxon>Hyphomicrobiales</taxon>
        <taxon>Brucellaceae</taxon>
        <taxon>Brucella/Ochrobactrum group</taxon>
        <taxon>Brucella</taxon>
    </lineage>
</organism>
<name>RNC_BRUA1</name>
<dbReference type="EC" id="3.1.26.3" evidence="1"/>
<dbReference type="EMBL" id="CP000887">
    <property type="protein sequence ID" value="ACD72169.1"/>
    <property type="molecule type" value="Genomic_DNA"/>
</dbReference>
<dbReference type="SMR" id="B2SAD9"/>
<dbReference type="KEGG" id="bmc:BAbS19_I06380"/>
<dbReference type="HOGENOM" id="CLU_000907_1_1_5"/>
<dbReference type="Proteomes" id="UP000002565">
    <property type="component" value="Chromosome 1"/>
</dbReference>
<dbReference type="GO" id="GO:0005737">
    <property type="term" value="C:cytoplasm"/>
    <property type="evidence" value="ECO:0007669"/>
    <property type="project" value="UniProtKB-SubCell"/>
</dbReference>
<dbReference type="GO" id="GO:0003725">
    <property type="term" value="F:double-stranded RNA binding"/>
    <property type="evidence" value="ECO:0007669"/>
    <property type="project" value="TreeGrafter"/>
</dbReference>
<dbReference type="GO" id="GO:0046872">
    <property type="term" value="F:metal ion binding"/>
    <property type="evidence" value="ECO:0007669"/>
    <property type="project" value="UniProtKB-KW"/>
</dbReference>
<dbReference type="GO" id="GO:0004525">
    <property type="term" value="F:ribonuclease III activity"/>
    <property type="evidence" value="ECO:0007669"/>
    <property type="project" value="UniProtKB-UniRule"/>
</dbReference>
<dbReference type="GO" id="GO:0019843">
    <property type="term" value="F:rRNA binding"/>
    <property type="evidence" value="ECO:0007669"/>
    <property type="project" value="UniProtKB-KW"/>
</dbReference>
<dbReference type="GO" id="GO:0006397">
    <property type="term" value="P:mRNA processing"/>
    <property type="evidence" value="ECO:0007669"/>
    <property type="project" value="UniProtKB-UniRule"/>
</dbReference>
<dbReference type="GO" id="GO:0010468">
    <property type="term" value="P:regulation of gene expression"/>
    <property type="evidence" value="ECO:0007669"/>
    <property type="project" value="TreeGrafter"/>
</dbReference>
<dbReference type="GO" id="GO:0006364">
    <property type="term" value="P:rRNA processing"/>
    <property type="evidence" value="ECO:0007669"/>
    <property type="project" value="UniProtKB-UniRule"/>
</dbReference>
<dbReference type="GO" id="GO:0008033">
    <property type="term" value="P:tRNA processing"/>
    <property type="evidence" value="ECO:0007669"/>
    <property type="project" value="UniProtKB-KW"/>
</dbReference>
<dbReference type="CDD" id="cd10845">
    <property type="entry name" value="DSRM_RNAse_III_family"/>
    <property type="match status" value="1"/>
</dbReference>
<dbReference type="CDD" id="cd00593">
    <property type="entry name" value="RIBOc"/>
    <property type="match status" value="1"/>
</dbReference>
<dbReference type="FunFam" id="3.30.160.20:FF:000003">
    <property type="entry name" value="Ribonuclease 3"/>
    <property type="match status" value="1"/>
</dbReference>
<dbReference type="Gene3D" id="3.30.160.20">
    <property type="match status" value="1"/>
</dbReference>
<dbReference type="Gene3D" id="1.10.1520.10">
    <property type="entry name" value="Ribonuclease III domain"/>
    <property type="match status" value="1"/>
</dbReference>
<dbReference type="HAMAP" id="MF_00104">
    <property type="entry name" value="RNase_III"/>
    <property type="match status" value="1"/>
</dbReference>
<dbReference type="InterPro" id="IPR014720">
    <property type="entry name" value="dsRBD_dom"/>
</dbReference>
<dbReference type="InterPro" id="IPR011907">
    <property type="entry name" value="RNase_III"/>
</dbReference>
<dbReference type="InterPro" id="IPR000999">
    <property type="entry name" value="RNase_III_dom"/>
</dbReference>
<dbReference type="InterPro" id="IPR036389">
    <property type="entry name" value="RNase_III_sf"/>
</dbReference>
<dbReference type="NCBIfam" id="TIGR02191">
    <property type="entry name" value="RNaseIII"/>
    <property type="match status" value="1"/>
</dbReference>
<dbReference type="PANTHER" id="PTHR11207:SF0">
    <property type="entry name" value="RIBONUCLEASE 3"/>
    <property type="match status" value="1"/>
</dbReference>
<dbReference type="PANTHER" id="PTHR11207">
    <property type="entry name" value="RIBONUCLEASE III"/>
    <property type="match status" value="1"/>
</dbReference>
<dbReference type="Pfam" id="PF00035">
    <property type="entry name" value="dsrm"/>
    <property type="match status" value="1"/>
</dbReference>
<dbReference type="Pfam" id="PF14622">
    <property type="entry name" value="Ribonucleas_3_3"/>
    <property type="match status" value="1"/>
</dbReference>
<dbReference type="SMART" id="SM00358">
    <property type="entry name" value="DSRM"/>
    <property type="match status" value="1"/>
</dbReference>
<dbReference type="SMART" id="SM00535">
    <property type="entry name" value="RIBOc"/>
    <property type="match status" value="1"/>
</dbReference>
<dbReference type="SUPFAM" id="SSF54768">
    <property type="entry name" value="dsRNA-binding domain-like"/>
    <property type="match status" value="1"/>
</dbReference>
<dbReference type="SUPFAM" id="SSF69065">
    <property type="entry name" value="RNase III domain-like"/>
    <property type="match status" value="1"/>
</dbReference>
<dbReference type="PROSITE" id="PS50137">
    <property type="entry name" value="DS_RBD"/>
    <property type="match status" value="1"/>
</dbReference>
<dbReference type="PROSITE" id="PS00517">
    <property type="entry name" value="RNASE_3_1"/>
    <property type="match status" value="1"/>
</dbReference>
<dbReference type="PROSITE" id="PS50142">
    <property type="entry name" value="RNASE_3_2"/>
    <property type="match status" value="1"/>
</dbReference>
<sequence>MNRTRPLPEIKMVSANKTASILEERTGHRFLNLKRLERALTHSSVQAPARANYERLEFLGDRVLGLTVAEMLFEAFPEASEGELSVRLNALVNAETCAAIADEIGLADLIHTGSDIKSLNDKRLLNVRADVVEALIATIYLDGGLEAARSFIQRYWKKRSLETGAARRDAKTELQEWAHQQGNVHPVYAILSRSGPDHDPLFLVEVTVKGFAPEKGEGRSKRIAEQSAAEAMLYREGVWKRDGSA</sequence>
<feature type="chain" id="PRO_1000094098" description="Ribonuclease 3">
    <location>
        <begin position="1"/>
        <end position="245"/>
    </location>
</feature>
<feature type="domain" description="RNase III" evidence="1">
    <location>
        <begin position="19"/>
        <end position="144"/>
    </location>
</feature>
<feature type="domain" description="DRBM" evidence="1">
    <location>
        <begin position="169"/>
        <end position="238"/>
    </location>
</feature>
<feature type="active site" evidence="1">
    <location>
        <position position="61"/>
    </location>
</feature>
<feature type="active site" evidence="1">
    <location>
        <position position="133"/>
    </location>
</feature>
<feature type="binding site" evidence="1">
    <location>
        <position position="57"/>
    </location>
    <ligand>
        <name>Mg(2+)</name>
        <dbReference type="ChEBI" id="CHEBI:18420"/>
    </ligand>
</feature>
<feature type="binding site" evidence="1">
    <location>
        <position position="130"/>
    </location>
    <ligand>
        <name>Mg(2+)</name>
        <dbReference type="ChEBI" id="CHEBI:18420"/>
    </ligand>
</feature>
<feature type="binding site" evidence="1">
    <location>
        <position position="133"/>
    </location>
    <ligand>
        <name>Mg(2+)</name>
        <dbReference type="ChEBI" id="CHEBI:18420"/>
    </ligand>
</feature>